<accession>P0A935</accession>
<accession>P46885</accession>
<accession>P76638</accession>
<accession>Q2MA21</accession>
<accession>Q46928</accession>
<protein>
    <recommendedName>
        <fullName>Membrane-bound lytic murein transglycosylase A</fullName>
        <ecNumber>4.2.2.n1</ecNumber>
    </recommendedName>
    <alternativeName>
        <fullName>Mlt38</fullName>
    </alternativeName>
    <alternativeName>
        <fullName>Murein hydrolase A</fullName>
    </alternativeName>
</protein>
<comment type="function">
    <text>Murein-degrading enzyme. May play a role in recycling of muropeptides during cell elongation and/or cell division. Degrades murein glycan strands and insoluble, high-molecular weight murein sacculi.</text>
</comment>
<comment type="catalytic activity">
    <reaction>
        <text>Exolytic cleavage of the (1-&gt;4)-beta-glycosidic linkage between N-acetylmuramic acid (MurNAc) and N-acetylglucosamine (GlcNAc) residues in peptidoglycan, from either the reducing or the non-reducing ends of the peptidoglycan chains, with concomitant formation of a 1,6-anhydrobond in the MurNAc residue.</text>
        <dbReference type="EC" id="4.2.2.n1"/>
    </reaction>
</comment>
<comment type="biophysicochemical properties">
    <phDependence>
        <text>Optimum pH is 4.0-4.5.</text>
    </phDependence>
    <temperatureDependence>
        <text>Loses rapidly its activity at temperatures above 30 degrees Celsius.</text>
    </temperatureDependence>
</comment>
<comment type="subunit">
    <text>Forms a trimeric complex with MrcB/PonB and MipA in vitro.</text>
</comment>
<comment type="subcellular location">
    <subcellularLocation>
        <location>Cell outer membrane</location>
        <topology>Lipid-anchor</topology>
    </subcellularLocation>
</comment>
<comment type="sequence caution" evidence="1">
    <conflict type="erroneous initiation">
        <sequence resource="EMBL-CDS" id="AAB40463"/>
    </conflict>
</comment>
<keyword id="KW-0002">3D-structure</keyword>
<keyword id="KW-0998">Cell outer membrane</keyword>
<keyword id="KW-0961">Cell wall biogenesis/degradation</keyword>
<keyword id="KW-0903">Direct protein sequencing</keyword>
<keyword id="KW-0449">Lipoprotein</keyword>
<keyword id="KW-0456">Lyase</keyword>
<keyword id="KW-0472">Membrane</keyword>
<keyword id="KW-0564">Palmitate</keyword>
<keyword id="KW-1185">Reference proteome</keyword>
<keyword id="KW-0732">Signal</keyword>
<feature type="signal peptide" evidence="1">
    <location>
        <begin position="1"/>
        <end position="20"/>
    </location>
</feature>
<feature type="chain" id="PRO_0000032781" description="Membrane-bound lytic murein transglycosylase A">
    <location>
        <begin position="21"/>
        <end position="365"/>
    </location>
</feature>
<feature type="lipid moiety-binding region" description="N-palmitoyl cysteine" evidence="1">
    <location>
        <position position="21"/>
    </location>
</feature>
<feature type="lipid moiety-binding region" description="S-diacylglycerol cysteine" evidence="1">
    <location>
        <position position="21"/>
    </location>
</feature>
<feature type="sequence conflict" description="In Ref. 1; AAC45723." evidence="1" ref="1">
    <original>H</original>
    <variation>N</variation>
    <location>
        <position position="346"/>
    </location>
</feature>
<feature type="strand" evidence="2">
    <location>
        <begin position="38"/>
        <end position="46"/>
    </location>
</feature>
<feature type="helix" evidence="2">
    <location>
        <begin position="56"/>
        <end position="69"/>
    </location>
</feature>
<feature type="helix" evidence="2">
    <location>
        <begin position="71"/>
        <end position="89"/>
    </location>
</feature>
<feature type="helix" evidence="2">
    <location>
        <begin position="94"/>
        <end position="100"/>
    </location>
</feature>
<feature type="strand" evidence="2">
    <location>
        <begin position="102"/>
        <end position="107"/>
    </location>
</feature>
<feature type="turn" evidence="2">
    <location>
        <begin position="109"/>
        <end position="112"/>
    </location>
</feature>
<feature type="strand" evidence="2">
    <location>
        <begin position="116"/>
        <end position="123"/>
    </location>
</feature>
<feature type="strand" evidence="2">
    <location>
        <begin position="125"/>
        <end position="131"/>
    </location>
</feature>
<feature type="strand" evidence="2">
    <location>
        <begin position="138"/>
        <end position="142"/>
    </location>
</feature>
<feature type="helix" evidence="2">
    <location>
        <begin position="148"/>
        <end position="150"/>
    </location>
</feature>
<feature type="helix" evidence="2">
    <location>
        <begin position="153"/>
        <end position="157"/>
    </location>
</feature>
<feature type="helix" evidence="2">
    <location>
        <begin position="163"/>
        <end position="165"/>
    </location>
</feature>
<feature type="strand" evidence="2">
    <location>
        <begin position="166"/>
        <end position="171"/>
    </location>
</feature>
<feature type="helix" evidence="2">
    <location>
        <begin position="173"/>
        <end position="182"/>
    </location>
</feature>
<feature type="strand" evidence="2">
    <location>
        <begin position="185"/>
        <end position="188"/>
    </location>
</feature>
<feature type="strand" evidence="2">
    <location>
        <begin position="190"/>
        <end position="192"/>
    </location>
</feature>
<feature type="strand" evidence="2">
    <location>
        <begin position="196"/>
        <end position="203"/>
    </location>
</feature>
<feature type="helix" evidence="2">
    <location>
        <begin position="211"/>
        <end position="217"/>
    </location>
</feature>
<feature type="helix" evidence="2">
    <location>
        <begin position="223"/>
        <end position="225"/>
    </location>
</feature>
<feature type="helix" evidence="2">
    <location>
        <begin position="228"/>
        <end position="236"/>
    </location>
</feature>
<feature type="helix" evidence="2">
    <location>
        <begin position="240"/>
        <end position="247"/>
    </location>
</feature>
<feature type="strand" evidence="2">
    <location>
        <begin position="254"/>
        <end position="259"/>
    </location>
</feature>
<feature type="strand" evidence="2">
    <location>
        <begin position="276"/>
        <end position="279"/>
    </location>
</feature>
<feature type="turn" evidence="2">
    <location>
        <begin position="282"/>
        <end position="284"/>
    </location>
</feature>
<feature type="strand" evidence="2">
    <location>
        <begin position="290"/>
        <end position="298"/>
    </location>
</feature>
<feature type="strand" evidence="3">
    <location>
        <begin position="300"/>
        <end position="302"/>
    </location>
</feature>
<feature type="strand" evidence="2">
    <location>
        <begin position="304"/>
        <end position="317"/>
    </location>
</feature>
<feature type="strand" evidence="2">
    <location>
        <begin position="327"/>
        <end position="334"/>
    </location>
</feature>
<feature type="helix" evidence="2">
    <location>
        <begin position="335"/>
        <end position="341"/>
    </location>
</feature>
<feature type="strand" evidence="2">
    <location>
        <begin position="346"/>
        <end position="355"/>
    </location>
</feature>
<organism>
    <name type="scientific">Escherichia coli (strain K12)</name>
    <dbReference type="NCBI Taxonomy" id="83333"/>
    <lineage>
        <taxon>Bacteria</taxon>
        <taxon>Pseudomonadati</taxon>
        <taxon>Pseudomonadota</taxon>
        <taxon>Gammaproteobacteria</taxon>
        <taxon>Enterobacterales</taxon>
        <taxon>Enterobacteriaceae</taxon>
        <taxon>Escherichia</taxon>
    </lineage>
</organism>
<reference key="1">
    <citation type="journal article" date="1997" name="J. Bacteriol.">
        <title>Outer membrane localization of murein hydrolases: MltA, a third lipoprotein lytic transglycosylase in Escherichia coli.</title>
        <authorList>
            <person name="Lommatzsch J."/>
            <person name="Templin M.F."/>
            <person name="Kraft A.R."/>
            <person name="Vollmer W."/>
            <person name="Hoeltje J.-V."/>
        </authorList>
    </citation>
    <scope>NUCLEOTIDE SEQUENCE [GENOMIC DNA]</scope>
    <scope>CHARACTERIZATION</scope>
    <source>
        <strain>K12</strain>
    </source>
</reference>
<reference key="2">
    <citation type="journal article" date="1997" name="Science">
        <title>The complete genome sequence of Escherichia coli K-12.</title>
        <authorList>
            <person name="Blattner F.R."/>
            <person name="Plunkett G. III"/>
            <person name="Bloch C.A."/>
            <person name="Perna N.T."/>
            <person name="Burland V."/>
            <person name="Riley M."/>
            <person name="Collado-Vides J."/>
            <person name="Glasner J.D."/>
            <person name="Rode C.K."/>
            <person name="Mayhew G.F."/>
            <person name="Gregor J."/>
            <person name="Davis N.W."/>
            <person name="Kirkpatrick H.A."/>
            <person name="Goeden M.A."/>
            <person name="Rose D.J."/>
            <person name="Mau B."/>
            <person name="Shao Y."/>
        </authorList>
    </citation>
    <scope>NUCLEOTIDE SEQUENCE [LARGE SCALE GENOMIC DNA]</scope>
    <source>
        <strain>K12 / MG1655 / ATCC 47076</strain>
    </source>
</reference>
<reference key="3">
    <citation type="journal article" date="2006" name="Mol. Syst. Biol.">
        <title>Highly accurate genome sequences of Escherichia coli K-12 strains MG1655 and W3110.</title>
        <authorList>
            <person name="Hayashi K."/>
            <person name="Morooka N."/>
            <person name="Yamamoto Y."/>
            <person name="Fujita K."/>
            <person name="Isono K."/>
            <person name="Choi S."/>
            <person name="Ohtsubo E."/>
            <person name="Baba T."/>
            <person name="Wanner B.L."/>
            <person name="Mori H."/>
            <person name="Horiuchi T."/>
        </authorList>
    </citation>
    <scope>NUCLEOTIDE SEQUENCE [LARGE SCALE GENOMIC DNA]</scope>
    <source>
        <strain>K12 / W3110 / ATCC 27325 / DSM 5911</strain>
    </source>
</reference>
<reference key="4">
    <citation type="journal article" date="1994" name="J. Bacteriol.">
        <title>Purification and properties of a membrane-bound lytic transglycosylase from Escherichia coli.</title>
        <authorList>
            <person name="Ursinus A."/>
            <person name="Hoeltje J.-V."/>
        </authorList>
    </citation>
    <scope>PROTEIN SEQUENCE OF 147-161; 204-213 AND 258-280</scope>
    <scope>CHARACTERIZATION</scope>
</reference>
<reference key="5">
    <citation type="journal article" date="1999" name="J. Biol. Chem.">
        <title>Demonstration of molecular interactions between the murein polymerase PBP1B, the lytic transglycosylase MltA, and the scaffolding protein MipA of Escherichia coli.</title>
        <authorList>
            <person name="Vollmer W."/>
            <person name="von Rechenberg M."/>
            <person name="Hoeltje J.-V."/>
        </authorList>
    </citation>
    <scope>INTERACTION WITH MIPA AND MRCB/PONB</scope>
    <source>
        <strain>K12 / MC1061 / ATCC 53338 / DSM 7140</strain>
    </source>
</reference>
<proteinExistence type="evidence at protein level"/>
<sequence>MKGRWVKYLLMGTVVAMLAACSSKPTDRGQQYKDGKFTQPFSLVNQPDAVGAPINAGDFAEQINHIRNSSPRLYGNQSNVYNAVQEWLRAGGDTRNMRQFGIDAWQMEGADNYGNVQFTGYYTPVIQARHTRQGEFQYPIYRMPPKRGRLPSRAEIYAGALSDKYILAYSNSLMDNFIMDVQGSGYIDFGDGSPLNFFSYAGKNGHAYRSIGKVLIDRGEVKKEDMSMQAIRHWGETHSEAEVRELLEQNPSFVFFKPQSFAPVKGASAVPLVGRASVASDRSIIPPGTTLLAEVPLLDNNGKFNGQYELRLMVALDVGGAIKGQHFDIYQGIGPEAGHRAGWYNHYGRVWVLKTAPGAGNVFSG</sequence>
<dbReference type="EC" id="4.2.2.n1"/>
<dbReference type="EMBL" id="U32224">
    <property type="protein sequence ID" value="AAC45723.1"/>
    <property type="molecule type" value="Genomic_DNA"/>
</dbReference>
<dbReference type="EMBL" id="U29581">
    <property type="protein sequence ID" value="AAB40463.1"/>
    <property type="status" value="ALT_INIT"/>
    <property type="molecule type" value="Genomic_DNA"/>
</dbReference>
<dbReference type="EMBL" id="U00096">
    <property type="protein sequence ID" value="AAC75855.1"/>
    <property type="molecule type" value="Genomic_DNA"/>
</dbReference>
<dbReference type="EMBL" id="AP009048">
    <property type="protein sequence ID" value="BAE76885.1"/>
    <property type="molecule type" value="Genomic_DNA"/>
</dbReference>
<dbReference type="PIR" id="A65064">
    <property type="entry name" value="A65064"/>
</dbReference>
<dbReference type="RefSeq" id="NP_417293.1">
    <property type="nucleotide sequence ID" value="NC_000913.3"/>
</dbReference>
<dbReference type="RefSeq" id="WP_000678646.1">
    <property type="nucleotide sequence ID" value="NZ_STEB01000030.1"/>
</dbReference>
<dbReference type="PDB" id="2AE0">
    <property type="method" value="X-ray"/>
    <property type="resolution" value="2.00 A"/>
    <property type="chains" value="X=22-365"/>
</dbReference>
<dbReference type="PDB" id="2GAE">
    <property type="method" value="X-ray"/>
    <property type="resolution" value="2.50 A"/>
    <property type="chains" value="A=22-365"/>
</dbReference>
<dbReference type="PDB" id="2PI8">
    <property type="method" value="X-ray"/>
    <property type="resolution" value="2.25 A"/>
    <property type="chains" value="A/B/C/D=22-365"/>
</dbReference>
<dbReference type="PDB" id="2PIC">
    <property type="method" value="X-ray"/>
    <property type="resolution" value="2.25 A"/>
    <property type="chains" value="A=22-365"/>
</dbReference>
<dbReference type="PDB" id="2PJJ">
    <property type="method" value="X-ray"/>
    <property type="resolution" value="2.46 A"/>
    <property type="chains" value="A=22-365"/>
</dbReference>
<dbReference type="PDBsum" id="2AE0"/>
<dbReference type="PDBsum" id="2GAE"/>
<dbReference type="PDBsum" id="2PI8"/>
<dbReference type="PDBsum" id="2PIC"/>
<dbReference type="PDBsum" id="2PJJ"/>
<dbReference type="SMR" id="P0A935"/>
<dbReference type="BioGRID" id="4261126">
    <property type="interactions" value="190"/>
</dbReference>
<dbReference type="DIP" id="DIP-51238N"/>
<dbReference type="FunCoup" id="P0A935">
    <property type="interactions" value="245"/>
</dbReference>
<dbReference type="IntAct" id="P0A935">
    <property type="interactions" value="2"/>
</dbReference>
<dbReference type="STRING" id="511145.b2813"/>
<dbReference type="CAZy" id="GH102">
    <property type="family name" value="Glycoside Hydrolase Family 102"/>
</dbReference>
<dbReference type="jPOST" id="P0A935"/>
<dbReference type="PaxDb" id="511145-b2813"/>
<dbReference type="EnsemblBacteria" id="AAC75855">
    <property type="protein sequence ID" value="AAC75855"/>
    <property type="gene ID" value="b2813"/>
</dbReference>
<dbReference type="GeneID" id="93779185"/>
<dbReference type="GeneID" id="944964"/>
<dbReference type="KEGG" id="ecj:JW2784"/>
<dbReference type="KEGG" id="eco:b2813"/>
<dbReference type="KEGG" id="ecoc:C3026_15460"/>
<dbReference type="PATRIC" id="fig|1411691.4.peg.3920"/>
<dbReference type="EchoBASE" id="EB2894"/>
<dbReference type="eggNOG" id="COG2821">
    <property type="taxonomic scope" value="Bacteria"/>
</dbReference>
<dbReference type="HOGENOM" id="CLU_037751_2_0_6"/>
<dbReference type="InParanoid" id="P0A935"/>
<dbReference type="OMA" id="DQNGHPY"/>
<dbReference type="OrthoDB" id="9783686at2"/>
<dbReference type="PhylomeDB" id="P0A935"/>
<dbReference type="BioCyc" id="EcoCyc:G7457-MONOMER"/>
<dbReference type="BioCyc" id="MetaCyc:G7457-MONOMER"/>
<dbReference type="EvolutionaryTrace" id="P0A935"/>
<dbReference type="PRO" id="PR:P0A935"/>
<dbReference type="Proteomes" id="UP000000625">
    <property type="component" value="Chromosome"/>
</dbReference>
<dbReference type="GO" id="GO:0009279">
    <property type="term" value="C:cell outer membrane"/>
    <property type="evidence" value="ECO:0000314"/>
    <property type="project" value="CACAO"/>
</dbReference>
<dbReference type="GO" id="GO:0030288">
    <property type="term" value="C:outer membrane-bounded periplasmic space"/>
    <property type="evidence" value="ECO:0000304"/>
    <property type="project" value="EcoCyc"/>
</dbReference>
<dbReference type="GO" id="GO:0004553">
    <property type="term" value="F:hydrolase activity, hydrolyzing O-glycosyl compounds"/>
    <property type="evidence" value="ECO:0007669"/>
    <property type="project" value="InterPro"/>
</dbReference>
<dbReference type="GO" id="GO:0008933">
    <property type="term" value="F:peptidoglycan lytic transglycosylase activity"/>
    <property type="evidence" value="ECO:0000314"/>
    <property type="project" value="EcoCyc"/>
</dbReference>
<dbReference type="GO" id="GO:0071555">
    <property type="term" value="P:cell wall organization"/>
    <property type="evidence" value="ECO:0007669"/>
    <property type="project" value="UniProtKB-KW"/>
</dbReference>
<dbReference type="GO" id="GO:0009253">
    <property type="term" value="P:peptidoglycan catabolic process"/>
    <property type="evidence" value="ECO:0000314"/>
    <property type="project" value="EcoCyc"/>
</dbReference>
<dbReference type="GO" id="GO:0000270">
    <property type="term" value="P:peptidoglycan metabolic process"/>
    <property type="evidence" value="ECO:0000269"/>
    <property type="project" value="EcoCyc"/>
</dbReference>
<dbReference type="GO" id="GO:0009254">
    <property type="term" value="P:peptidoglycan turnover"/>
    <property type="evidence" value="ECO:0007669"/>
    <property type="project" value="InterPro"/>
</dbReference>
<dbReference type="CDD" id="cd22785">
    <property type="entry name" value="DPBB_MltA-like"/>
    <property type="match status" value="1"/>
</dbReference>
<dbReference type="CDD" id="cd14472">
    <property type="entry name" value="mltA_B_like"/>
    <property type="match status" value="1"/>
</dbReference>
<dbReference type="FunFam" id="2.40.240.50:FF:000001">
    <property type="entry name" value="Membrane-bound lytic murein transglycosylase A"/>
    <property type="match status" value="1"/>
</dbReference>
<dbReference type="Gene3D" id="2.40.240.50">
    <property type="entry name" value="Barwin-like endoglucanases"/>
    <property type="match status" value="1"/>
</dbReference>
<dbReference type="Gene3D" id="2.40.40.10">
    <property type="entry name" value="RlpA-like domain"/>
    <property type="match status" value="1"/>
</dbReference>
<dbReference type="InterPro" id="IPR010611">
    <property type="entry name" value="3D_dom"/>
</dbReference>
<dbReference type="InterPro" id="IPR026044">
    <property type="entry name" value="MltA"/>
</dbReference>
<dbReference type="InterPro" id="IPR005300">
    <property type="entry name" value="MltA_B"/>
</dbReference>
<dbReference type="InterPro" id="IPR036908">
    <property type="entry name" value="RlpA-like_sf"/>
</dbReference>
<dbReference type="NCBIfam" id="NF008366">
    <property type="entry name" value="PRK11162.1"/>
    <property type="match status" value="1"/>
</dbReference>
<dbReference type="PANTHER" id="PTHR30124">
    <property type="entry name" value="MEMBRANE-BOUND LYTIC MUREIN TRANSGLYCOSYLASE A"/>
    <property type="match status" value="1"/>
</dbReference>
<dbReference type="PANTHER" id="PTHR30124:SF0">
    <property type="entry name" value="MEMBRANE-BOUND LYTIC MUREIN TRANSGLYCOSYLASE A"/>
    <property type="match status" value="1"/>
</dbReference>
<dbReference type="Pfam" id="PF06725">
    <property type="entry name" value="3D"/>
    <property type="match status" value="1"/>
</dbReference>
<dbReference type="Pfam" id="PF03562">
    <property type="entry name" value="MltA"/>
    <property type="match status" value="1"/>
</dbReference>
<dbReference type="PIRSF" id="PIRSF019422">
    <property type="entry name" value="MltA"/>
    <property type="match status" value="1"/>
</dbReference>
<dbReference type="SMART" id="SM00925">
    <property type="entry name" value="MltA"/>
    <property type="match status" value="1"/>
</dbReference>
<dbReference type="SUPFAM" id="SSF50685">
    <property type="entry name" value="Barwin-like endoglucanases"/>
    <property type="match status" value="1"/>
</dbReference>
<dbReference type="PROSITE" id="PS51257">
    <property type="entry name" value="PROKAR_LIPOPROTEIN"/>
    <property type="match status" value="1"/>
</dbReference>
<gene>
    <name type="primary">mltA</name>
    <name type="synonym">mlt</name>
    <name type="synonym">ygdM</name>
    <name type="ordered locus">b2813</name>
    <name type="ordered locus">JW2784</name>
</gene>
<name>MLTA_ECOLI</name>
<evidence type="ECO:0000305" key="1"/>
<evidence type="ECO:0007829" key="2">
    <source>
        <dbReference type="PDB" id="2AE0"/>
    </source>
</evidence>
<evidence type="ECO:0007829" key="3">
    <source>
        <dbReference type="PDB" id="2GAE"/>
    </source>
</evidence>